<keyword id="KW-0067">ATP-binding</keyword>
<keyword id="KW-0436">Ligase</keyword>
<keyword id="KW-0479">Metal-binding</keyword>
<keyword id="KW-0547">Nucleotide-binding</keyword>
<keyword id="KW-1185">Reference proteome</keyword>
<keyword id="KW-0862">Zinc</keyword>
<sequence>MQSWQKPLVADFRSVVGEDQPVPLHMWDTASREVTPLTPSDEATVYVCGITPYDSTHLGHAATYVTFDVLNRQLLANGHRVNFVQNVTDVDDPLFERAQRDGVDWQELGEEQTDLFRQDMANLGVIPPTSYIGAVEAIPDVIDMVSTLLDNGSAYVVDDPTYPDVYADRTATPQFGYESRYDEATMEQFFAERGGDPDRPGKRDPLDSLLWRAERPGEPAWDSPFGRGRPGWHIECAAIAARYLGSHFDVQGGGEDLIFPHHEYSAAHVEAACGVERMADHYMHTGLIALGGVKMSKSLGNLVFVSRLCNAGTDPSSIRLALYAGHYRDQRNWSDALLAAASRRLALWRTAVETVHAHNDADSEARARRLVDDVRQALATDLDTPAAVDLVDEWAGSIVDKEKIWDLPGVDGKNAHESLSVPVPCAAPATDDKLSVAQGKITILDDGKDSEADAKSVELASATAGTQRCGAHSHASGELTVDLLPAPHQRGDAPSALYSHLSPAAALVAGCVDALLGLKL</sequence>
<gene>
    <name evidence="1" type="primary">mshC</name>
    <name type="ordered locus">ckrop_0920</name>
</gene>
<dbReference type="EC" id="6.3.1.13" evidence="1"/>
<dbReference type="EMBL" id="CP001620">
    <property type="protein sequence ID" value="ACR17674.1"/>
    <property type="molecule type" value="Genomic_DNA"/>
</dbReference>
<dbReference type="SMR" id="C4LIL9"/>
<dbReference type="STRING" id="645127.ckrop_0920"/>
<dbReference type="KEGG" id="ckp:ckrop_0920"/>
<dbReference type="eggNOG" id="COG0215">
    <property type="taxonomic scope" value="Bacteria"/>
</dbReference>
<dbReference type="HOGENOM" id="CLU_013528_0_0_11"/>
<dbReference type="OrthoDB" id="9815130at2"/>
<dbReference type="Proteomes" id="UP000001473">
    <property type="component" value="Chromosome"/>
</dbReference>
<dbReference type="GO" id="GO:0005829">
    <property type="term" value="C:cytosol"/>
    <property type="evidence" value="ECO:0007669"/>
    <property type="project" value="TreeGrafter"/>
</dbReference>
<dbReference type="GO" id="GO:0005524">
    <property type="term" value="F:ATP binding"/>
    <property type="evidence" value="ECO:0007669"/>
    <property type="project" value="UniProtKB-KW"/>
</dbReference>
<dbReference type="GO" id="GO:0035446">
    <property type="term" value="F:cysteine-glucosaminylinositol ligase activity"/>
    <property type="evidence" value="ECO:0007669"/>
    <property type="project" value="UniProtKB-UniRule"/>
</dbReference>
<dbReference type="GO" id="GO:0004817">
    <property type="term" value="F:cysteine-tRNA ligase activity"/>
    <property type="evidence" value="ECO:0007669"/>
    <property type="project" value="TreeGrafter"/>
</dbReference>
<dbReference type="GO" id="GO:0008270">
    <property type="term" value="F:zinc ion binding"/>
    <property type="evidence" value="ECO:0007669"/>
    <property type="project" value="UniProtKB-UniRule"/>
</dbReference>
<dbReference type="GO" id="GO:0006423">
    <property type="term" value="P:cysteinyl-tRNA aminoacylation"/>
    <property type="evidence" value="ECO:0007669"/>
    <property type="project" value="TreeGrafter"/>
</dbReference>
<dbReference type="GO" id="GO:0010125">
    <property type="term" value="P:mycothiol biosynthetic process"/>
    <property type="evidence" value="ECO:0007669"/>
    <property type="project" value="UniProtKB-UniRule"/>
</dbReference>
<dbReference type="CDD" id="cd00672">
    <property type="entry name" value="CysRS_core"/>
    <property type="match status" value="1"/>
</dbReference>
<dbReference type="Gene3D" id="1.20.120.640">
    <property type="entry name" value="Anticodon-binding domain of a subclass of class I aminoacyl-tRNA synthetases"/>
    <property type="match status" value="1"/>
</dbReference>
<dbReference type="Gene3D" id="3.40.50.620">
    <property type="entry name" value="HUPs"/>
    <property type="match status" value="1"/>
</dbReference>
<dbReference type="HAMAP" id="MF_01697">
    <property type="entry name" value="MshC"/>
    <property type="match status" value="1"/>
</dbReference>
<dbReference type="InterPro" id="IPR024909">
    <property type="entry name" value="Cys-tRNA/MSH_ligase"/>
</dbReference>
<dbReference type="InterPro" id="IPR017812">
    <property type="entry name" value="Mycothiol_ligase_MshC"/>
</dbReference>
<dbReference type="InterPro" id="IPR014729">
    <property type="entry name" value="Rossmann-like_a/b/a_fold"/>
</dbReference>
<dbReference type="InterPro" id="IPR032678">
    <property type="entry name" value="tRNA-synt_1_cat_dom"/>
</dbReference>
<dbReference type="NCBIfam" id="TIGR03447">
    <property type="entry name" value="mycothiol_MshC"/>
    <property type="match status" value="1"/>
</dbReference>
<dbReference type="PANTHER" id="PTHR10890:SF3">
    <property type="entry name" value="CYSTEINE--TRNA LIGASE, CYTOPLASMIC"/>
    <property type="match status" value="1"/>
</dbReference>
<dbReference type="PANTHER" id="PTHR10890">
    <property type="entry name" value="CYSTEINYL-TRNA SYNTHETASE"/>
    <property type="match status" value="1"/>
</dbReference>
<dbReference type="Pfam" id="PF01406">
    <property type="entry name" value="tRNA-synt_1e"/>
    <property type="match status" value="1"/>
</dbReference>
<dbReference type="PRINTS" id="PR00983">
    <property type="entry name" value="TRNASYNTHCYS"/>
</dbReference>
<dbReference type="SUPFAM" id="SSF52374">
    <property type="entry name" value="Nucleotidylyl transferase"/>
    <property type="match status" value="1"/>
</dbReference>
<reference key="1">
    <citation type="journal article" date="2008" name="J. Biotechnol.">
        <title>Ultrafast pyrosequencing of Corynebacterium kroppenstedtii DSM44385 revealed insights into the physiology of a lipophilic corynebacterium that lacks mycolic acids.</title>
        <authorList>
            <person name="Tauch A."/>
            <person name="Schneider J."/>
            <person name="Szczepanowski R."/>
            <person name="Tilker A."/>
            <person name="Viehoever P."/>
            <person name="Gartemann K.-H."/>
            <person name="Arnold W."/>
            <person name="Blom J."/>
            <person name="Brinkrolf K."/>
            <person name="Brune I."/>
            <person name="Goetker S."/>
            <person name="Weisshaar B."/>
            <person name="Goesmann A."/>
            <person name="Droege M."/>
            <person name="Puehler A."/>
        </authorList>
    </citation>
    <scope>NUCLEOTIDE SEQUENCE [LARGE SCALE GENOMIC DNA]</scope>
    <source>
        <strain>DSM 44385 / JCM 11950 / CIP 105744 / CCUG 35717</strain>
    </source>
</reference>
<evidence type="ECO:0000255" key="1">
    <source>
        <dbReference type="HAMAP-Rule" id="MF_01697"/>
    </source>
</evidence>
<protein>
    <recommendedName>
        <fullName evidence="1">L-cysteine:1D-myo-inositol 2-amino-2-deoxy-alpha-D-glucopyranoside ligase</fullName>
        <shortName evidence="1">L-Cys:GlcN-Ins ligase</shortName>
        <ecNumber evidence="1">6.3.1.13</ecNumber>
    </recommendedName>
    <alternativeName>
        <fullName evidence="1">Mycothiol ligase</fullName>
        <shortName evidence="1">MSH ligase</shortName>
    </alternativeName>
</protein>
<accession>C4LIL9</accession>
<organism>
    <name type="scientific">Corynebacterium kroppenstedtii (strain DSM 44385 / JCM 11950 / CIP 105744 / CCUG 35717)</name>
    <dbReference type="NCBI Taxonomy" id="645127"/>
    <lineage>
        <taxon>Bacteria</taxon>
        <taxon>Bacillati</taxon>
        <taxon>Actinomycetota</taxon>
        <taxon>Actinomycetes</taxon>
        <taxon>Mycobacteriales</taxon>
        <taxon>Corynebacteriaceae</taxon>
        <taxon>Corynebacterium</taxon>
    </lineage>
</organism>
<name>MSHC_CORK4</name>
<feature type="chain" id="PRO_0000400441" description="L-cysteine:1D-myo-inositol 2-amino-2-deoxy-alpha-D-glucopyranoside ligase">
    <location>
        <begin position="1"/>
        <end position="520"/>
    </location>
</feature>
<feature type="short sequence motif" description="'HIGH' region" evidence="1">
    <location>
        <begin position="50"/>
        <end position="60"/>
    </location>
</feature>
<feature type="short sequence motif" description="'ERGGDP' region" evidence="1">
    <location>
        <begin position="192"/>
        <end position="197"/>
    </location>
</feature>
<feature type="short sequence motif" description="'KMSKS' region" evidence="1">
    <location>
        <begin position="294"/>
        <end position="298"/>
    </location>
</feature>
<feature type="binding site" evidence="1">
    <location>
        <begin position="48"/>
        <end position="51"/>
    </location>
    <ligand>
        <name>L-cysteinyl-5'-AMP</name>
        <dbReference type="ChEBI" id="CHEBI:144924"/>
    </ligand>
</feature>
<feature type="binding site" evidence="1">
    <location>
        <position position="48"/>
    </location>
    <ligand>
        <name>Zn(2+)</name>
        <dbReference type="ChEBI" id="CHEBI:29105"/>
    </ligand>
</feature>
<feature type="binding site" evidence="1">
    <location>
        <position position="63"/>
    </location>
    <ligand>
        <name>L-cysteinyl-5'-AMP</name>
        <dbReference type="ChEBI" id="CHEBI:144924"/>
    </ligand>
</feature>
<feature type="binding site" evidence="1">
    <location>
        <begin position="86"/>
        <end position="88"/>
    </location>
    <ligand>
        <name>L-cysteinyl-5'-AMP</name>
        <dbReference type="ChEBI" id="CHEBI:144924"/>
    </ligand>
</feature>
<feature type="binding site" evidence="1">
    <location>
        <position position="232"/>
    </location>
    <ligand>
        <name>L-cysteinyl-5'-AMP</name>
        <dbReference type="ChEBI" id="CHEBI:144924"/>
    </ligand>
</feature>
<feature type="binding site" evidence="1">
    <location>
        <position position="236"/>
    </location>
    <ligand>
        <name>Zn(2+)</name>
        <dbReference type="ChEBI" id="CHEBI:29105"/>
    </ligand>
</feature>
<feature type="binding site" evidence="1">
    <location>
        <begin position="254"/>
        <end position="256"/>
    </location>
    <ligand>
        <name>L-cysteinyl-5'-AMP</name>
        <dbReference type="ChEBI" id="CHEBI:144924"/>
    </ligand>
</feature>
<feature type="binding site" evidence="1">
    <location>
        <position position="261"/>
    </location>
    <ligand>
        <name>Zn(2+)</name>
        <dbReference type="ChEBI" id="CHEBI:29105"/>
    </ligand>
</feature>
<feature type="binding site" evidence="1">
    <location>
        <position position="288"/>
    </location>
    <ligand>
        <name>L-cysteinyl-5'-AMP</name>
        <dbReference type="ChEBI" id="CHEBI:144924"/>
    </ligand>
</feature>
<proteinExistence type="inferred from homology"/>
<comment type="function">
    <text evidence="1">Catalyzes the ATP-dependent condensation of GlcN-Ins and L-cysteine to form L-Cys-GlcN-Ins.</text>
</comment>
<comment type="catalytic activity">
    <reaction evidence="1">
        <text>1D-myo-inositol 2-amino-2-deoxy-alpha-D-glucopyranoside + L-cysteine + ATP = 1D-myo-inositol 2-(L-cysteinylamino)-2-deoxy-alpha-D-glucopyranoside + AMP + diphosphate + H(+)</text>
        <dbReference type="Rhea" id="RHEA:26176"/>
        <dbReference type="ChEBI" id="CHEBI:15378"/>
        <dbReference type="ChEBI" id="CHEBI:30616"/>
        <dbReference type="ChEBI" id="CHEBI:33019"/>
        <dbReference type="ChEBI" id="CHEBI:35235"/>
        <dbReference type="ChEBI" id="CHEBI:58886"/>
        <dbReference type="ChEBI" id="CHEBI:58887"/>
        <dbReference type="ChEBI" id="CHEBI:456215"/>
        <dbReference type="EC" id="6.3.1.13"/>
    </reaction>
</comment>
<comment type="cofactor">
    <cofactor evidence="1">
        <name>Zn(2+)</name>
        <dbReference type="ChEBI" id="CHEBI:29105"/>
    </cofactor>
    <text evidence="1">Binds 1 zinc ion per subunit.</text>
</comment>
<comment type="subunit">
    <text evidence="1">Monomer.</text>
</comment>
<comment type="similarity">
    <text evidence="1">Belongs to the class-I aminoacyl-tRNA synthetase family. MshC subfamily.</text>
</comment>